<name>NVFI_ASPN1</name>
<proteinExistence type="evidence at protein level"/>
<protein>
    <recommendedName>
        <fullName evidence="2">Fe(II)/2-oxoglutarate-dependent dioxygenase nvfI</fullName>
        <ecNumber evidence="1">1.14.11.-</ecNumber>
    </recommendedName>
    <alternativeName>
        <fullName evidence="2">Fumigatonoid A synthase nvfI</fullName>
    </alternativeName>
    <alternativeName>
        <fullName evidence="2">Novofumigatonin biosynthesis cluster protein I</fullName>
    </alternativeName>
</protein>
<comment type="function">
    <text evidence="1">Fe(II)/2-oxoglutarate-dependent dioxygenase; part of the gene cluster that mediates the biosynthesis of novofumigatonin, a heavily oxygenated meroterpenoid containing a unique orthoester moiety (PubMed:29968715). The first step of the pathway is the synthesis of 3,5-dimethylorsellinic acid (DMOA) by the polyketide synthase nvfA via condensation of one acetyl-CoA starter unit with 3 malonyl-CoA units and 2 methylations (PubMed:29968715). DMOA is then converted to farnesyl-DMOA by the farnesyltransferase nvfB (PubMed:29968715). Epoxydation by FAD-dependent monooxygenase nvfK, followed by a protonation-initiated cyclization catalyzed by the terpene cyclase nvfL leads to the production of asnavolin H (PubMed:29968715). The short chain dehydrogenase nvfC then as a 3-OH dehydrogenase of asnovolin H to yield chemesin D (PubMed:29968715). There are two branches to synthesize asnovolin A from chemesin D (PubMed:29968715). In one branch, chemesin D undergoes Baeyer-Villiger oxidation by nvfH, methylation by nvfJ, and enoyl reduction by the nvfM D enoylreductase that reduces the double bond between C-5'and C-6', to form respectively asnovolin I, asnovolin K, and asnovolin A (PubMed:29968715). In the other branch, the methylation precedes the Baeyer-Villiger oxidation and the enoyl reduction to yield asnovolin A via the asnovolin J intermediate (PubMed:29968715). Asnovolin A is further converted to fumigatonoid A by the Fe(II)/2-oxoglutarate-dependent dioxygenase nvfI that catalyzes an endoperoxidation reaction (PubMed:29968715). The alpha/beta hydrolase nvfD then acts as an epimerase that converts fumigatonoid A to its C-5' epimer, which then undergoes spontaneous or nvfD-catalyzed lactonization (PubMed:29968715). The following step utilizes the ketoreductase nvfG to produce fumigatonoid B (PubMed:29968715). The dioxygenase nvfE further converts fumigatonoid B into fumigatonoid C (PubMed:29968715). Finally the Fe(II)/2-oxoglutarate-dependent dioxygenase nvfF catalyzes two rounds of oxidation to transform fumigatonoid C into the end product, novofumigatonin A (PubMed:29968715).</text>
</comment>
<comment type="catalytic activity">
    <reaction evidence="1">
        <text>asnovolin A + 2-oxoglutarate + 2 O2 = fumigatonoid A + succinate + CO2</text>
        <dbReference type="Rhea" id="RHEA:67096"/>
        <dbReference type="ChEBI" id="CHEBI:15379"/>
        <dbReference type="ChEBI" id="CHEBI:16526"/>
        <dbReference type="ChEBI" id="CHEBI:16810"/>
        <dbReference type="ChEBI" id="CHEBI:30031"/>
        <dbReference type="ChEBI" id="CHEBI:156459"/>
        <dbReference type="ChEBI" id="CHEBI:167687"/>
    </reaction>
    <physiologicalReaction direction="left-to-right" evidence="1">
        <dbReference type="Rhea" id="RHEA:67097"/>
    </physiologicalReaction>
</comment>
<comment type="pathway">
    <text evidence="1">Secondary metabolite biosynthesis; terpenoid biosynthesis.</text>
</comment>
<comment type="disruption phenotype">
    <text evidence="1">Completely abolishes the production of novofumigatonin, but accumulates asnovolin A.</text>
</comment>
<comment type="similarity">
    <text evidence="3">Belongs to the asaB hydroxylase/desaturase family.</text>
</comment>
<comment type="sequence caution" evidence="1">
    <conflict type="erroneous gene model prediction">
        <sequence resource="EMBL-CDS" id="PKX88479"/>
    </conflict>
</comment>
<sequence>MVGSRTWCESEMLFVQPDAGTKEELYYRVTPKPGQTQANFNWTPHKVRFHDARPQRDSFDLNTHGFTFVEDAISPQLIERIRADDTAAVEGDYFASVAALVKRVTGADHVVCFSPYTRKENSEKGIFGQPARTVHCDHTPAAAIELTHKLCGEDAVRLLQSRFRAFSVWRPLVEPVLDWPLAVVDGRTIAPDDLHPVHWLRYEKKDTEPPFQLSFSETQKWYYLSRQRSDEVSIVKNYDSEVVPSPRSAHCAFKHPFVPKDAPPRESIDVRCLVFGGR</sequence>
<dbReference type="EC" id="1.14.11.-" evidence="1"/>
<dbReference type="EMBL" id="MSZS01000014">
    <property type="protein sequence ID" value="PKX88479.1"/>
    <property type="status" value="ALT_SEQ"/>
    <property type="molecule type" value="Genomic_DNA"/>
</dbReference>
<dbReference type="PDB" id="7DE2">
    <property type="method" value="X-ray"/>
    <property type="resolution" value="1.90 A"/>
    <property type="chains" value="A/B=1-278"/>
</dbReference>
<dbReference type="PDB" id="7EMZ">
    <property type="method" value="X-ray"/>
    <property type="resolution" value="2.30 A"/>
    <property type="chains" value="A/B=1-278"/>
</dbReference>
<dbReference type="PDB" id="7ENB">
    <property type="method" value="X-ray"/>
    <property type="resolution" value="2.30 A"/>
    <property type="chains" value="A/B=1-278"/>
</dbReference>
<dbReference type="PDBsum" id="7DE2"/>
<dbReference type="PDBsum" id="7EMZ"/>
<dbReference type="PDBsum" id="7ENB"/>
<dbReference type="SMR" id="A0A2I1BSX0"/>
<dbReference type="VEuPathDB" id="FungiDB:P174DRAFT_436154"/>
<dbReference type="OrthoDB" id="412788at2759"/>
<dbReference type="UniPathway" id="UPA00213"/>
<dbReference type="Proteomes" id="UP000234474">
    <property type="component" value="Unassembled WGS sequence"/>
</dbReference>
<dbReference type="GO" id="GO:0016491">
    <property type="term" value="F:oxidoreductase activity"/>
    <property type="evidence" value="ECO:0000314"/>
    <property type="project" value="UniProt"/>
</dbReference>
<dbReference type="GO" id="GO:0140782">
    <property type="term" value="P:novofumigatonin biosynthetic process"/>
    <property type="evidence" value="ECO:0000314"/>
    <property type="project" value="GO_Central"/>
</dbReference>
<dbReference type="InterPro" id="IPR044053">
    <property type="entry name" value="AsaB-like"/>
</dbReference>
<dbReference type="NCBIfam" id="NF041278">
    <property type="entry name" value="CmcJ_NvfI_EfuI"/>
    <property type="match status" value="1"/>
</dbReference>
<dbReference type="PANTHER" id="PTHR34598">
    <property type="entry name" value="BLL6449 PROTEIN"/>
    <property type="match status" value="1"/>
</dbReference>
<dbReference type="PANTHER" id="PTHR34598:SF3">
    <property type="entry name" value="OXIDOREDUCTASE AN1597"/>
    <property type="match status" value="1"/>
</dbReference>
<keyword id="KW-0002">3D-structure</keyword>
<keyword id="KW-0560">Oxidoreductase</keyword>
<keyword id="KW-1185">Reference proteome</keyword>
<evidence type="ECO:0000269" key="1">
    <source>
    </source>
</evidence>
<evidence type="ECO:0000303" key="2">
    <source>
    </source>
</evidence>
<evidence type="ECO:0000305" key="3"/>
<evidence type="ECO:0007829" key="4">
    <source>
        <dbReference type="PDB" id="7DE2"/>
    </source>
</evidence>
<accession>A0A2I1BSX0</accession>
<feature type="chain" id="PRO_0000453084" description="Fe(II)/2-oxoglutarate-dependent dioxygenase nvfI">
    <location>
        <begin position="1"/>
        <end position="278"/>
    </location>
</feature>
<feature type="strand" evidence="4">
    <location>
        <begin position="7"/>
        <end position="15"/>
    </location>
</feature>
<feature type="turn" evidence="4">
    <location>
        <begin position="17"/>
        <end position="20"/>
    </location>
</feature>
<feature type="strand" evidence="4">
    <location>
        <begin position="21"/>
        <end position="23"/>
    </location>
</feature>
<feature type="strand" evidence="4">
    <location>
        <begin position="25"/>
        <end position="30"/>
    </location>
</feature>
<feature type="strand" evidence="4">
    <location>
        <begin position="38"/>
        <end position="40"/>
    </location>
</feature>
<feature type="strand" evidence="4">
    <location>
        <begin position="43"/>
        <end position="51"/>
    </location>
</feature>
<feature type="helix" evidence="4">
    <location>
        <begin position="53"/>
        <end position="58"/>
    </location>
</feature>
<feature type="turn" evidence="4">
    <location>
        <begin position="61"/>
        <end position="64"/>
    </location>
</feature>
<feature type="strand" evidence="4">
    <location>
        <begin position="65"/>
        <end position="70"/>
    </location>
</feature>
<feature type="helix" evidence="4">
    <location>
        <begin position="75"/>
        <end position="82"/>
    </location>
</feature>
<feature type="helix" evidence="4">
    <location>
        <begin position="86"/>
        <end position="90"/>
    </location>
</feature>
<feature type="helix" evidence="4">
    <location>
        <begin position="92"/>
        <end position="105"/>
    </location>
</feature>
<feature type="strand" evidence="4">
    <location>
        <begin position="108"/>
        <end position="119"/>
    </location>
</feature>
<feature type="helix" evidence="4">
    <location>
        <begin position="126"/>
        <end position="128"/>
    </location>
</feature>
<feature type="strand" evidence="4">
    <location>
        <begin position="135"/>
        <end position="137"/>
    </location>
</feature>
<feature type="helix" evidence="4">
    <location>
        <begin position="140"/>
        <end position="151"/>
    </location>
</feature>
<feature type="helix" evidence="4">
    <location>
        <begin position="152"/>
        <end position="154"/>
    </location>
</feature>
<feature type="helix" evidence="4">
    <location>
        <begin position="155"/>
        <end position="158"/>
    </location>
</feature>
<feature type="strand" evidence="4">
    <location>
        <begin position="163"/>
        <end position="175"/>
    </location>
</feature>
<feature type="strand" evidence="4">
    <location>
        <begin position="181"/>
        <end position="184"/>
    </location>
</feature>
<feature type="helix" evidence="4">
    <location>
        <begin position="186"/>
        <end position="188"/>
    </location>
</feature>
<feature type="helix" evidence="4">
    <location>
        <begin position="191"/>
        <end position="193"/>
    </location>
</feature>
<feature type="strand" evidence="4">
    <location>
        <begin position="194"/>
        <end position="204"/>
    </location>
</feature>
<feature type="strand" evidence="4">
    <location>
        <begin position="211"/>
        <end position="214"/>
    </location>
</feature>
<feature type="strand" evidence="4">
    <location>
        <begin position="221"/>
        <end position="223"/>
    </location>
</feature>
<feature type="strand" evidence="4">
    <location>
        <begin position="231"/>
        <end position="241"/>
    </location>
</feature>
<feature type="strand" evidence="4">
    <location>
        <begin position="250"/>
        <end position="252"/>
    </location>
</feature>
<feature type="strand" evidence="4">
    <location>
        <begin position="266"/>
        <end position="276"/>
    </location>
</feature>
<organism>
    <name type="scientific">Aspergillus novofumigatus (strain IBT 16806)</name>
    <dbReference type="NCBI Taxonomy" id="1392255"/>
    <lineage>
        <taxon>Eukaryota</taxon>
        <taxon>Fungi</taxon>
        <taxon>Dikarya</taxon>
        <taxon>Ascomycota</taxon>
        <taxon>Pezizomycotina</taxon>
        <taxon>Eurotiomycetes</taxon>
        <taxon>Eurotiomycetidae</taxon>
        <taxon>Eurotiales</taxon>
        <taxon>Aspergillaceae</taxon>
        <taxon>Aspergillus</taxon>
        <taxon>Aspergillus subgen. Fumigati</taxon>
    </lineage>
</organism>
<reference key="1">
    <citation type="journal article" date="2018" name="Proc. Natl. Acad. Sci. U.S.A.">
        <title>Linking secondary metabolites to gene clusters through genome sequencing of six diverse Aspergillus species.</title>
        <authorList>
            <person name="Kjaerboelling I."/>
            <person name="Vesth T.C."/>
            <person name="Frisvad J.C."/>
            <person name="Nybo J.L."/>
            <person name="Theobald S."/>
            <person name="Kuo A."/>
            <person name="Bowyer P."/>
            <person name="Matsuda Y."/>
            <person name="Mondo S."/>
            <person name="Lyhne E.K."/>
            <person name="Kogle M.E."/>
            <person name="Clum A."/>
            <person name="Lipzen A."/>
            <person name="Salamov A."/>
            <person name="Ngan C.Y."/>
            <person name="Daum C."/>
            <person name="Chiniquy J."/>
            <person name="Barry K."/>
            <person name="LaButti K."/>
            <person name="Haridas S."/>
            <person name="Simmons B.A."/>
            <person name="Magnuson J.K."/>
            <person name="Mortensen U.H."/>
            <person name="Larsen T.O."/>
            <person name="Grigoriev I.V."/>
            <person name="Baker S.E."/>
            <person name="Andersen M.R."/>
        </authorList>
    </citation>
    <scope>NUCLEOTIDE SEQUENCE [LARGE SCALE GENOMIC DNA]</scope>
    <source>
        <strain>IBT 16806</strain>
    </source>
</reference>
<reference key="2">
    <citation type="journal article" date="2018" name="Nat. Commun.">
        <title>Novofumigatonin biosynthesis involves a non-heme iron-dependent endoperoxide isomerase for orthoester formation.</title>
        <authorList>
            <person name="Matsuda Y."/>
            <person name="Bai T."/>
            <person name="Phippen C.B.W."/>
            <person name="Noedvig C.S."/>
            <person name="Kjaerboelling I."/>
            <person name="Vesth T.C."/>
            <person name="Andersen M.R."/>
            <person name="Mortensen U.H."/>
            <person name="Gotfredsen C.H."/>
            <person name="Abe I."/>
            <person name="Larsen T.O."/>
        </authorList>
    </citation>
    <scope>FUNCTION</scope>
    <scope>DISRUPTION PHENOTYPE</scope>
    <scope>CATALYTIC ACTIVITY</scope>
    <scope>PATHWAY</scope>
</reference>
<gene>
    <name evidence="2" type="primary">nvfI</name>
    <name type="ORF">P174DRAFT_436154</name>
</gene>